<reference key="1">
    <citation type="journal article" date="2001" name="Proc. Natl. Acad. Sci. U.S.A.">
        <title>Genome sequence of an industrial microorganism Streptomyces avermitilis: deducing the ability of producing secondary metabolites.</title>
        <authorList>
            <person name="Omura S."/>
            <person name="Ikeda H."/>
            <person name="Ishikawa J."/>
            <person name="Hanamoto A."/>
            <person name="Takahashi C."/>
            <person name="Shinose M."/>
            <person name="Takahashi Y."/>
            <person name="Horikawa H."/>
            <person name="Nakazawa H."/>
            <person name="Osonoe T."/>
            <person name="Kikuchi H."/>
            <person name="Shiba T."/>
            <person name="Sakaki Y."/>
            <person name="Hattori M."/>
        </authorList>
    </citation>
    <scope>NUCLEOTIDE SEQUENCE [LARGE SCALE GENOMIC DNA]</scope>
    <source>
        <strain>ATCC 31267 / DSM 46492 / JCM 5070 / NBRC 14893 / NCIMB 12804 / NRRL 8165 / MA-4680</strain>
    </source>
</reference>
<reference key="2">
    <citation type="journal article" date="2003" name="Nat. Biotechnol.">
        <title>Complete genome sequence and comparative analysis of the industrial microorganism Streptomyces avermitilis.</title>
        <authorList>
            <person name="Ikeda H."/>
            <person name="Ishikawa J."/>
            <person name="Hanamoto A."/>
            <person name="Shinose M."/>
            <person name="Kikuchi H."/>
            <person name="Shiba T."/>
            <person name="Sakaki Y."/>
            <person name="Hattori M."/>
            <person name="Omura S."/>
        </authorList>
    </citation>
    <scope>NUCLEOTIDE SEQUENCE [LARGE SCALE GENOMIC DNA]</scope>
    <source>
        <strain>ATCC 31267 / DSM 46492 / JCM 5070 / NBRC 14893 / NCIMB 12804 / NRRL 8165 / MA-4680</strain>
    </source>
</reference>
<reference key="3">
    <citation type="journal article" date="2006" name="Biochemistry">
        <title>A gene cluster for biosynthesis of the sesquiterpenoid antibiotic pentalenolactone in Streptomyces avermitilis.</title>
        <authorList>
            <person name="Tetzlaff C.N."/>
            <person name="You Z."/>
            <person name="Cane D.E."/>
            <person name="Takamatsu S."/>
            <person name="Omura S."/>
            <person name="Ikeda H."/>
        </authorList>
    </citation>
    <scope>FUNCTION</scope>
    <scope>CATALYTIC ACTIVITY</scope>
    <scope>BIOPHYSICOCHEMICAL PROPERTIES</scope>
    <source>
        <strain>ATCC 31267 / DSM 46492 / JCM 5070 / NBRC 14893 / NCIMB 12804 / NRRL 8165 / MA-4680</strain>
    </source>
</reference>
<reference key="4">
    <citation type="journal article" date="2011" name="Biochemistry">
        <title>Genome mining in Streptomyces. Elucidation of the role of Baeyer-Villiger monooxygenases and non-heme iron-dependent dehydrogenase/oxygenases in the final steps of the biosynthesis of pentalenolactone and neopentalenolactone.</title>
        <authorList>
            <person name="Seo M.J."/>
            <person name="Zhu D."/>
            <person name="Endo S."/>
            <person name="Ikeda H."/>
            <person name="Cane D.E."/>
        </authorList>
    </citation>
    <scope>PATHWAY</scope>
    <source>
        <strain>ATCC 31267 / DSM 46492 / JCM 5070 / NBRC 14893 / NCIMB 12804 / NRRL 8165 / MA-4680</strain>
    </source>
</reference>
<keyword id="KW-0045">Antibiotic biosynthesis</keyword>
<keyword id="KW-0456">Lyase</keyword>
<keyword id="KW-0460">Magnesium</keyword>
<keyword id="KW-0479">Metal-binding</keyword>
<keyword id="KW-1185">Reference proteome</keyword>
<gene>
    <name type="primary">ptlA</name>
    <name type="ordered locus">SAV_2998</name>
</gene>
<sequence length="336" mass="37897">MPQDVDFHIPFPSRRSPDFERARADHLSWPRALGLIGTDAAAERHSRGGYADLAARFYPSATGADLDLGVDLMSWFFLFDDLFDGPRGEDPQETRKLTDAVAAALDGPLPTSAPPIAHGFADVWRRTCQGMSPAWRARSARHWRNYFSGYVDEAVSRHLNTPYDSAGHYLAMRRQTIGVQPTVDLAERSCHCEVPQRVFDSAVLFAMLQIATDTNLILNDIASLEKEEARGELNNMVFILMREHGWTRGRSIAHMQDGVRTRLEQFLLLEACLPKVYDTFELTAQERESAEKYRMDGVRSVIRGSYDWHRSSGRYAADYAIAASYQGYLEELGSTL</sequence>
<accession>Q82IY4</accession>
<organism>
    <name type="scientific">Streptomyces avermitilis (strain ATCC 31267 / DSM 46492 / JCM 5070 / NBRC 14893 / NCIMB 12804 / NRRL 8165 / MA-4680)</name>
    <dbReference type="NCBI Taxonomy" id="227882"/>
    <lineage>
        <taxon>Bacteria</taxon>
        <taxon>Bacillati</taxon>
        <taxon>Actinomycetota</taxon>
        <taxon>Actinomycetes</taxon>
        <taxon>Kitasatosporales</taxon>
        <taxon>Streptomycetaceae</taxon>
        <taxon>Streptomyces</taxon>
    </lineage>
</organism>
<feature type="chain" id="PRO_0000422012" description="Pentalenene synthase">
    <location>
        <begin position="1"/>
        <end position="336"/>
    </location>
</feature>
<feature type="short sequence motif" description="DDXXD motif">
    <location>
        <begin position="80"/>
        <end position="84"/>
    </location>
</feature>
<feature type="binding site" evidence="1">
    <location>
        <position position="80"/>
    </location>
    <ligand>
        <name>Mg(2+)</name>
        <dbReference type="ChEBI" id="CHEBI:18420"/>
        <label>1</label>
    </ligand>
</feature>
<feature type="binding site" evidence="1">
    <location>
        <position position="80"/>
    </location>
    <ligand>
        <name>Mg(2+)</name>
        <dbReference type="ChEBI" id="CHEBI:18420"/>
        <label>2</label>
    </ligand>
</feature>
<feature type="binding site" evidence="1">
    <location>
        <position position="84"/>
    </location>
    <ligand>
        <name>Mg(2+)</name>
        <dbReference type="ChEBI" id="CHEBI:18420"/>
        <label>1</label>
    </ligand>
</feature>
<feature type="binding site" evidence="1">
    <location>
        <position position="84"/>
    </location>
    <ligand>
        <name>Mg(2+)</name>
        <dbReference type="ChEBI" id="CHEBI:18420"/>
        <label>2</label>
    </ligand>
</feature>
<feature type="binding site" evidence="1">
    <location>
        <position position="219"/>
    </location>
    <ligand>
        <name>Mg(2+)</name>
        <dbReference type="ChEBI" id="CHEBI:18420"/>
        <label>3</label>
    </ligand>
</feature>
<feature type="binding site" evidence="1">
    <location>
        <position position="223"/>
    </location>
    <ligand>
        <name>Mg(2+)</name>
        <dbReference type="ChEBI" id="CHEBI:18420"/>
        <label>3</label>
    </ligand>
</feature>
<feature type="binding site" evidence="1">
    <location>
        <position position="227"/>
    </location>
    <ligand>
        <name>Mg(2+)</name>
        <dbReference type="ChEBI" id="CHEBI:18420"/>
        <label>3</label>
    </ligand>
</feature>
<evidence type="ECO:0000250" key="1"/>
<evidence type="ECO:0000269" key="2">
    <source>
    </source>
</evidence>
<evidence type="ECO:0000269" key="3">
    <source>
    </source>
</evidence>
<evidence type="ECO:0000305" key="4"/>
<evidence type="ECO:0000305" key="5">
    <source>
    </source>
</evidence>
<protein>
    <recommendedName>
        <fullName>Pentalenene synthase</fullName>
        <shortName>PS</shortName>
        <ecNumber>4.2.3.7</ecNumber>
    </recommendedName>
    <alternativeName>
        <fullName>Pentalenolactone biosynthesis protein A</fullName>
    </alternativeName>
    <alternativeName>
        <fullName>Sesquiterpene cyclase</fullName>
    </alternativeName>
    <alternativeName>
        <fullName>Sesquiterpene synthase</fullName>
    </alternativeName>
</protein>
<name>PTLA_STRAW</name>
<dbReference type="EC" id="4.2.3.7"/>
<dbReference type="EMBL" id="BA000030">
    <property type="protein sequence ID" value="BAC70709.1"/>
    <property type="molecule type" value="Genomic_DNA"/>
</dbReference>
<dbReference type="RefSeq" id="WP_010984429.1">
    <property type="nucleotide sequence ID" value="NZ_JZJK01000090.1"/>
</dbReference>
<dbReference type="SMR" id="Q82IY4"/>
<dbReference type="GeneID" id="41540079"/>
<dbReference type="KEGG" id="sma:SAVERM_2998"/>
<dbReference type="eggNOG" id="COG2124">
    <property type="taxonomic scope" value="Bacteria"/>
</dbReference>
<dbReference type="HOGENOM" id="CLU_042538_4_0_11"/>
<dbReference type="OrthoDB" id="3676909at2"/>
<dbReference type="BioCyc" id="MetaCyc:MONOMER-16846"/>
<dbReference type="UniPathway" id="UPA01021"/>
<dbReference type="Proteomes" id="UP000000428">
    <property type="component" value="Chromosome"/>
</dbReference>
<dbReference type="GO" id="GO:0046872">
    <property type="term" value="F:metal ion binding"/>
    <property type="evidence" value="ECO:0007669"/>
    <property type="project" value="UniProtKB-KW"/>
</dbReference>
<dbReference type="GO" id="GO:0050467">
    <property type="term" value="F:pentalenene synthase activity"/>
    <property type="evidence" value="ECO:0000314"/>
    <property type="project" value="UniProtKB"/>
</dbReference>
<dbReference type="GO" id="GO:0017000">
    <property type="term" value="P:antibiotic biosynthetic process"/>
    <property type="evidence" value="ECO:0000314"/>
    <property type="project" value="UniProtKB"/>
</dbReference>
<dbReference type="GO" id="GO:1901336">
    <property type="term" value="P:lactone biosynthetic process"/>
    <property type="evidence" value="ECO:0000314"/>
    <property type="project" value="UniProtKB"/>
</dbReference>
<dbReference type="FunFam" id="1.10.600.10:FF:000044">
    <property type="entry name" value="(2Z,6E)-hedycaryol synthase"/>
    <property type="match status" value="1"/>
</dbReference>
<dbReference type="Gene3D" id="1.10.600.10">
    <property type="entry name" value="Farnesyl Diphosphate Synthase"/>
    <property type="match status" value="1"/>
</dbReference>
<dbReference type="InterPro" id="IPR008949">
    <property type="entry name" value="Isoprenoid_synthase_dom_sf"/>
</dbReference>
<dbReference type="InterPro" id="IPR054969">
    <property type="entry name" value="PentlnSyn"/>
</dbReference>
<dbReference type="InterPro" id="IPR034686">
    <property type="entry name" value="Terpene_cyclase-like_2"/>
</dbReference>
<dbReference type="NCBIfam" id="NF045811">
    <property type="entry name" value="PentlnSynPtlA"/>
    <property type="match status" value="1"/>
</dbReference>
<dbReference type="PANTHER" id="PTHR35201:SF4">
    <property type="entry name" value="BETA-PINACENE SYNTHASE-RELATED"/>
    <property type="match status" value="1"/>
</dbReference>
<dbReference type="PANTHER" id="PTHR35201">
    <property type="entry name" value="TERPENE SYNTHASE"/>
    <property type="match status" value="1"/>
</dbReference>
<dbReference type="Pfam" id="PF19086">
    <property type="entry name" value="Terpene_syn_C_2"/>
    <property type="match status" value="1"/>
</dbReference>
<dbReference type="SFLD" id="SFLDS00005">
    <property type="entry name" value="Isoprenoid_Synthase_Type_I"/>
    <property type="match status" value="1"/>
</dbReference>
<dbReference type="SFLD" id="SFLDG01020">
    <property type="entry name" value="Terpene_Cyclase_Like_2"/>
    <property type="match status" value="1"/>
</dbReference>
<dbReference type="SUPFAM" id="SSF48576">
    <property type="entry name" value="Terpenoid synthases"/>
    <property type="match status" value="1"/>
</dbReference>
<comment type="function">
    <text evidence="2">Catalyzes the cyclization of farnesyl diphosphate (FPP) to the tricyclic sesquiterpene pentalenene in the biosynthesis of neopentalenolactone antibiotic.</text>
</comment>
<comment type="catalytic activity">
    <reaction evidence="2">
        <text>(2E,6E)-farnesyl diphosphate = pentalenene + diphosphate</text>
        <dbReference type="Rhea" id="RHEA:18081"/>
        <dbReference type="ChEBI" id="CHEBI:17251"/>
        <dbReference type="ChEBI" id="CHEBI:33019"/>
        <dbReference type="ChEBI" id="CHEBI:175763"/>
        <dbReference type="EC" id="4.2.3.7"/>
    </reaction>
</comment>
<comment type="cofactor">
    <cofactor evidence="1">
        <name>Mg(2+)</name>
        <dbReference type="ChEBI" id="CHEBI:18420"/>
    </cofactor>
    <text evidence="1">Binds 3 Mg(2+) ions per subunit.</text>
</comment>
<comment type="biophysicochemical properties">
    <kinetics>
        <KM evidence="2">36 uM for farnesyl diphosphate</KM>
        <text>kcat is 0.605 sec(-1).</text>
    </kinetics>
</comment>
<comment type="pathway">
    <text evidence="3">Antibiotic biosynthesis; neopentalenolactone biosynthesis.</text>
</comment>
<comment type="subunit">
    <text evidence="1">Monomer.</text>
</comment>
<comment type="domain">
    <text evidence="1">The Asp-Asp-Xaa-Xaa-Asp/Glu (DDXXD/E) motif is important for the catalytic activity, presumably through binding to Mg(2+).</text>
</comment>
<comment type="miscellaneous">
    <text evidence="5">S.avermitilis does not produce pentalenolactone itself in vivo but instead a group of new metabolites that are neopentalenolactone derivatives.</text>
</comment>
<comment type="similarity">
    <text evidence="4">Belongs to the terpene synthase family.</text>
</comment>
<proteinExistence type="evidence at protein level"/>